<accession>Q64029</accession>
<name>XPA_CRIGR</name>
<proteinExistence type="evidence at transcript level"/>
<keyword id="KW-0227">DNA damage</keyword>
<keyword id="KW-0234">DNA repair</keyword>
<keyword id="KW-0238">DNA-binding</keyword>
<keyword id="KW-1017">Isopeptide bond</keyword>
<keyword id="KW-0479">Metal-binding</keyword>
<keyword id="KW-0539">Nucleus</keyword>
<keyword id="KW-0597">Phosphoprotein</keyword>
<keyword id="KW-0832">Ubl conjugation</keyword>
<keyword id="KW-0862">Zinc</keyword>
<keyword id="KW-0863">Zinc-finger</keyword>
<protein>
    <recommendedName>
        <fullName>DNA repair protein complementing XP-A cells homolog</fullName>
    </recommendedName>
    <alternativeName>
        <fullName>Xeroderma pigmentosum group A-complementing protein homolog</fullName>
    </alternativeName>
</protein>
<reference key="1">
    <citation type="journal article" date="1994" name="Somat. Cell Mol. Genet.">
        <title>Mutation and expression of the XPA gene in revertants and hybrids of a Xeroderma pigmentosum cell line.</title>
        <authorList>
            <person name="Cleaver J.E."/>
            <person name="McDowell M."/>
            <person name="Jones C."/>
            <person name="Wood R."/>
            <person name="Karentz D."/>
        </authorList>
    </citation>
    <scope>NUCLEOTIDE SEQUENCE [MRNA]</scope>
    <scope>FUNCTION</scope>
    <source>
        <tissue>Ovary</tissue>
    </source>
</reference>
<evidence type="ECO:0000250" key="1"/>
<evidence type="ECO:0000250" key="2">
    <source>
        <dbReference type="UniProtKB" id="P23025"/>
    </source>
</evidence>
<evidence type="ECO:0000269" key="3">
    <source>
    </source>
</evidence>
<evidence type="ECO:0000305" key="4"/>
<feature type="chain" id="PRO_0000208647" description="DNA repair protein complementing XP-A cells homolog">
    <location>
        <begin position="1" status="less than"/>
        <end position="97" status="greater than"/>
    </location>
</feature>
<feature type="zinc finger region">
    <location>
        <begin position="1" status="less than"/>
        <end position="15"/>
    </location>
</feature>
<feature type="binding site" evidence="2">
    <location>
        <position position="12"/>
    </location>
    <ligand>
        <name>Zn(2+)</name>
        <dbReference type="ChEBI" id="CHEBI:29105"/>
    </ligand>
</feature>
<feature type="binding site" evidence="2">
    <location>
        <position position="15"/>
    </location>
    <ligand>
        <name>Zn(2+)</name>
        <dbReference type="ChEBI" id="CHEBI:29105"/>
    </ligand>
</feature>
<feature type="modified residue" description="Phosphoserine" evidence="2">
    <location>
        <position position="82"/>
    </location>
</feature>
<feature type="cross-link" description="Glycyl lysine isopeptide (Lys-Gly) (interchain with G-Cter in SUMO2)" evidence="2">
    <location>
        <position position="31"/>
    </location>
</feature>
<feature type="non-terminal residue">
    <location>
        <position position="1"/>
    </location>
</feature>
<feature type="non-terminal residue">
    <location>
        <position position="97"/>
    </location>
</feature>
<sequence length="97" mass="11519">SYLMNHFDLPTCDSCRDADDKHKLITKTEAKQEYLLKDCDLEKREPALRFIVKKNPRHSQWGDMKLYLKLQVVKRALEVWGSQDALEDAKEVRQENR</sequence>
<dbReference type="EMBL" id="S74024">
    <property type="protein sequence ID" value="AAP21086.1"/>
    <property type="molecule type" value="mRNA"/>
</dbReference>
<dbReference type="SMR" id="Q64029"/>
<dbReference type="PaxDb" id="10029-XP_007617660.1"/>
<dbReference type="eggNOG" id="KOG4017">
    <property type="taxonomic scope" value="Eukaryota"/>
</dbReference>
<dbReference type="Proteomes" id="UP000694386">
    <property type="component" value="Unplaced"/>
</dbReference>
<dbReference type="Proteomes" id="UP001108280">
    <property type="component" value="Unplaced"/>
</dbReference>
<dbReference type="GO" id="GO:0000110">
    <property type="term" value="C:nucleotide-excision repair factor 1 complex"/>
    <property type="evidence" value="ECO:0007669"/>
    <property type="project" value="TreeGrafter"/>
</dbReference>
<dbReference type="GO" id="GO:0003684">
    <property type="term" value="F:damaged DNA binding"/>
    <property type="evidence" value="ECO:0000250"/>
    <property type="project" value="UniProtKB"/>
</dbReference>
<dbReference type="GO" id="GO:0008270">
    <property type="term" value="F:zinc ion binding"/>
    <property type="evidence" value="ECO:0007669"/>
    <property type="project" value="UniProtKB-KW"/>
</dbReference>
<dbReference type="GO" id="GO:0006284">
    <property type="term" value="P:base-excision repair"/>
    <property type="evidence" value="ECO:0007669"/>
    <property type="project" value="TreeGrafter"/>
</dbReference>
<dbReference type="GO" id="GO:1901255">
    <property type="term" value="P:nucleotide-excision repair involved in interstrand cross-link repair"/>
    <property type="evidence" value="ECO:0007669"/>
    <property type="project" value="TreeGrafter"/>
</dbReference>
<dbReference type="GO" id="GO:0000715">
    <property type="term" value="P:nucleotide-excision repair, DNA damage recognition"/>
    <property type="evidence" value="ECO:0007669"/>
    <property type="project" value="TreeGrafter"/>
</dbReference>
<dbReference type="GO" id="GO:0070914">
    <property type="term" value="P:UV-damage excision repair"/>
    <property type="evidence" value="ECO:0007669"/>
    <property type="project" value="TreeGrafter"/>
</dbReference>
<dbReference type="CDD" id="cd21076">
    <property type="entry name" value="DBD_XPA"/>
    <property type="match status" value="1"/>
</dbReference>
<dbReference type="FunFam" id="3.90.530.10:FF:000001">
    <property type="entry name" value="DNA repair protein complementing XP-A cells"/>
    <property type="match status" value="1"/>
</dbReference>
<dbReference type="Gene3D" id="3.90.530.10">
    <property type="entry name" value="XPA C-terminal domain"/>
    <property type="match status" value="1"/>
</dbReference>
<dbReference type="InterPro" id="IPR009061">
    <property type="entry name" value="DNA-bd_dom_put_sf"/>
</dbReference>
<dbReference type="InterPro" id="IPR000465">
    <property type="entry name" value="XPA/RAD14"/>
</dbReference>
<dbReference type="InterPro" id="IPR022656">
    <property type="entry name" value="XPA_C"/>
</dbReference>
<dbReference type="InterPro" id="IPR022658">
    <property type="entry name" value="XPA_CS"/>
</dbReference>
<dbReference type="InterPro" id="IPR037129">
    <property type="entry name" value="XPA_sf"/>
</dbReference>
<dbReference type="InterPro" id="IPR022652">
    <property type="entry name" value="Znf_XPA_CS"/>
</dbReference>
<dbReference type="NCBIfam" id="TIGR00598">
    <property type="entry name" value="rad14"/>
    <property type="match status" value="1"/>
</dbReference>
<dbReference type="PANTHER" id="PTHR10142">
    <property type="entry name" value="DNA REPAIR PROTEIN COMPLEMENTING XP-A CELLS"/>
    <property type="match status" value="1"/>
</dbReference>
<dbReference type="PANTHER" id="PTHR10142:SF0">
    <property type="entry name" value="DNA REPAIR PROTEIN COMPLEMENTING XP-A CELLS"/>
    <property type="match status" value="1"/>
</dbReference>
<dbReference type="Pfam" id="PF05181">
    <property type="entry name" value="XPA_C"/>
    <property type="match status" value="1"/>
</dbReference>
<dbReference type="Pfam" id="PF01286">
    <property type="entry name" value="XPA_N"/>
    <property type="match status" value="1"/>
</dbReference>
<dbReference type="SUPFAM" id="SSF46955">
    <property type="entry name" value="Putative DNA-binding domain"/>
    <property type="match status" value="1"/>
</dbReference>
<dbReference type="PROSITE" id="PS00753">
    <property type="entry name" value="XPA_2"/>
    <property type="match status" value="1"/>
</dbReference>
<organism>
    <name type="scientific">Cricetulus griseus</name>
    <name type="common">Chinese hamster</name>
    <name type="synonym">Cricetulus barabensis griseus</name>
    <dbReference type="NCBI Taxonomy" id="10029"/>
    <lineage>
        <taxon>Eukaryota</taxon>
        <taxon>Metazoa</taxon>
        <taxon>Chordata</taxon>
        <taxon>Craniata</taxon>
        <taxon>Vertebrata</taxon>
        <taxon>Euteleostomi</taxon>
        <taxon>Mammalia</taxon>
        <taxon>Eutheria</taxon>
        <taxon>Euarchontoglires</taxon>
        <taxon>Glires</taxon>
        <taxon>Rodentia</taxon>
        <taxon>Myomorpha</taxon>
        <taxon>Muroidea</taxon>
        <taxon>Cricetidae</taxon>
        <taxon>Cricetinae</taxon>
        <taxon>Cricetulus</taxon>
    </lineage>
</organism>
<gene>
    <name type="primary">XPA</name>
    <name type="synonym">XPAC</name>
</gene>
<comment type="function">
    <text evidence="1 3">Involved in DNA excision repair. Initiates repair by binding to damaged sites with various affinities, depending on the photoproduct and the transcriptional state of the region. Required for UV-induced CHEK1 phosphorylation and the recruitment of CEP164 to cyclobutane pyrimidine dimmers (CPD), sites of DNA damage after UV irradiation (By similarity).</text>
</comment>
<comment type="subunit">
    <text evidence="1">Interacts with GPN1. Interacts with RPA1 and RPA2; the interaction is direct and associates XPA with the RPA complex. Interacts (via N-terminus) with CEP164 upon UV irradiation. Interacts with HERC2 (By similarity).</text>
</comment>
<comment type="subcellular location">
    <subcellularLocation>
        <location evidence="1">Nucleus</location>
    </subcellularLocation>
</comment>
<comment type="PTM">
    <text evidence="1">Ubiquitinated by HERC2 leading to degradation by the proteasome.</text>
</comment>
<comment type="similarity">
    <text evidence="4">Belongs to the XPA family.</text>
</comment>